<organism>
    <name type="scientific">Gallus gallus</name>
    <name type="common">Chicken</name>
    <dbReference type="NCBI Taxonomy" id="9031"/>
    <lineage>
        <taxon>Eukaryota</taxon>
        <taxon>Metazoa</taxon>
        <taxon>Chordata</taxon>
        <taxon>Craniata</taxon>
        <taxon>Vertebrata</taxon>
        <taxon>Euteleostomi</taxon>
        <taxon>Archelosauria</taxon>
        <taxon>Archosauria</taxon>
        <taxon>Dinosauria</taxon>
        <taxon>Saurischia</taxon>
        <taxon>Theropoda</taxon>
        <taxon>Coelurosauria</taxon>
        <taxon>Aves</taxon>
        <taxon>Neognathae</taxon>
        <taxon>Galloanserae</taxon>
        <taxon>Galliformes</taxon>
        <taxon>Phasianidae</taxon>
        <taxon>Phasianinae</taxon>
        <taxon>Gallus</taxon>
    </lineage>
</organism>
<dbReference type="EMBL" id="AJ452155">
    <property type="status" value="NOT_ANNOTATED_CDS"/>
    <property type="molecule type" value="mRNA"/>
</dbReference>
<dbReference type="EMBL" id="BU128959">
    <property type="status" value="NOT_ANNOTATED_CDS"/>
    <property type="molecule type" value="mRNA"/>
</dbReference>
<dbReference type="EMBL" id="BU260128">
    <property type="status" value="NOT_ANNOTATED_CDS"/>
    <property type="molecule type" value="mRNA"/>
</dbReference>
<dbReference type="EMBL" id="BU381659">
    <property type="status" value="NOT_ANNOTATED_CDS"/>
    <property type="molecule type" value="mRNA"/>
</dbReference>
<dbReference type="EMBL" id="BU382952">
    <property type="status" value="NOT_ANNOTATED_CDS"/>
    <property type="molecule type" value="mRNA"/>
</dbReference>
<dbReference type="EMBL" id="BU433983">
    <property type="status" value="NOT_ANNOTATED_CDS"/>
    <property type="molecule type" value="mRNA"/>
</dbReference>
<dbReference type="EMBL" id="CD734856">
    <property type="status" value="NOT_ANNOTATED_CDS"/>
    <property type="molecule type" value="mRNA"/>
</dbReference>
<dbReference type="EMBL" id="AADN02051672">
    <property type="status" value="NOT_ANNOTATED_CDS"/>
    <property type="molecule type" value="Genomic_DNA"/>
</dbReference>
<dbReference type="RefSeq" id="NP_001263242.1">
    <property type="nucleotide sequence ID" value="NM_001276313.1"/>
</dbReference>
<dbReference type="PDB" id="3B0C">
    <property type="method" value="X-ray"/>
    <property type="resolution" value="2.20 A"/>
    <property type="chains" value="T=531-639"/>
</dbReference>
<dbReference type="PDB" id="3B0D">
    <property type="method" value="X-ray"/>
    <property type="resolution" value="2.20 A"/>
    <property type="chains" value="B/T=531-639"/>
</dbReference>
<dbReference type="PDB" id="3VH5">
    <property type="method" value="X-ray"/>
    <property type="resolution" value="2.40 A"/>
    <property type="chains" value="T=531-637"/>
</dbReference>
<dbReference type="PDB" id="3VH6">
    <property type="method" value="X-ray"/>
    <property type="resolution" value="3.35 A"/>
    <property type="chains" value="T=531-637"/>
</dbReference>
<dbReference type="PDB" id="3VZA">
    <property type="method" value="X-ray"/>
    <property type="resolution" value="1.90 A"/>
    <property type="chains" value="E/F=63-98"/>
</dbReference>
<dbReference type="PDBsum" id="3B0C"/>
<dbReference type="PDBsum" id="3B0D"/>
<dbReference type="PDBsum" id="3VH5"/>
<dbReference type="PDBsum" id="3VH6"/>
<dbReference type="PDBsum" id="3VZA"/>
<dbReference type="SMR" id="F1NPG5"/>
<dbReference type="BioGRID" id="677267">
    <property type="interactions" value="1"/>
</dbReference>
<dbReference type="FunCoup" id="F1NPG5">
    <property type="interactions" value="583"/>
</dbReference>
<dbReference type="IntAct" id="F1NPG5">
    <property type="interactions" value="5"/>
</dbReference>
<dbReference type="MINT" id="F1NPG5"/>
<dbReference type="STRING" id="9031.ENSGALP00000051819"/>
<dbReference type="GlyGen" id="F1NPG5">
    <property type="glycosylation" value="1 site"/>
</dbReference>
<dbReference type="iPTMnet" id="F1NPG5"/>
<dbReference type="PaxDb" id="9031-ENSGALP00000042737"/>
<dbReference type="GeneID" id="415654"/>
<dbReference type="KEGG" id="gga:415654"/>
<dbReference type="CTD" id="80152"/>
<dbReference type="VEuPathDB" id="HostDB:geneid_415654"/>
<dbReference type="eggNOG" id="ENOG502RZH1">
    <property type="taxonomic scope" value="Eukaryota"/>
</dbReference>
<dbReference type="HOGENOM" id="CLU_040180_0_0_1"/>
<dbReference type="InParanoid" id="F1NPG5"/>
<dbReference type="OrthoDB" id="10071681at2759"/>
<dbReference type="Reactome" id="R-GGA-141444">
    <property type="pathway name" value="Amplification of signal from unattached kinetochores via a MAD2 inhibitory signal"/>
</dbReference>
<dbReference type="Reactome" id="R-GGA-2467813">
    <property type="pathway name" value="Separation of Sister Chromatids"/>
</dbReference>
<dbReference type="Reactome" id="R-GGA-2500257">
    <property type="pathway name" value="Resolution of Sister Chromatid Cohesion"/>
</dbReference>
<dbReference type="Reactome" id="R-GGA-5663220">
    <property type="pathway name" value="RHO GTPases Activate Formins"/>
</dbReference>
<dbReference type="Reactome" id="R-GGA-606279">
    <property type="pathway name" value="Deposition of new CENPA-containing nucleosomes at the centromere"/>
</dbReference>
<dbReference type="Reactome" id="R-GGA-9648025">
    <property type="pathway name" value="EML4 and NUDC in mitotic spindle formation"/>
</dbReference>
<dbReference type="EvolutionaryTrace" id="F1NPG5"/>
<dbReference type="PRO" id="PR:F1NPG5"/>
<dbReference type="Proteomes" id="UP000000539">
    <property type="component" value="Chromosome 11"/>
</dbReference>
<dbReference type="Bgee" id="ENSGALG00000028900">
    <property type="expression patterns" value="Expressed in testis and 14 other cell types or tissues"/>
</dbReference>
<dbReference type="GO" id="GO:0000776">
    <property type="term" value="C:kinetochore"/>
    <property type="evidence" value="ECO:0007669"/>
    <property type="project" value="UniProtKB-KW"/>
</dbReference>
<dbReference type="GO" id="GO:0005634">
    <property type="term" value="C:nucleus"/>
    <property type="evidence" value="ECO:0007669"/>
    <property type="project" value="UniProtKB-SubCell"/>
</dbReference>
<dbReference type="GO" id="GO:0003677">
    <property type="term" value="F:DNA binding"/>
    <property type="evidence" value="ECO:0007669"/>
    <property type="project" value="UniProtKB-KW"/>
</dbReference>
<dbReference type="GO" id="GO:0046982">
    <property type="term" value="F:protein heterodimerization activity"/>
    <property type="evidence" value="ECO:0007669"/>
    <property type="project" value="InterPro"/>
</dbReference>
<dbReference type="GO" id="GO:0051301">
    <property type="term" value="P:cell division"/>
    <property type="evidence" value="ECO:0007669"/>
    <property type="project" value="UniProtKB-KW"/>
</dbReference>
<dbReference type="GO" id="GO:0007059">
    <property type="term" value="P:chromosome segregation"/>
    <property type="evidence" value="ECO:0000318"/>
    <property type="project" value="GO_Central"/>
</dbReference>
<dbReference type="GO" id="GO:0051382">
    <property type="term" value="P:kinetochore assembly"/>
    <property type="evidence" value="ECO:0007669"/>
    <property type="project" value="InterPro"/>
</dbReference>
<dbReference type="GO" id="GO:0000278">
    <property type="term" value="P:mitotic cell cycle"/>
    <property type="evidence" value="ECO:0000318"/>
    <property type="project" value="GO_Central"/>
</dbReference>
<dbReference type="CDD" id="cd22920">
    <property type="entry name" value="HFD_CENP-T"/>
    <property type="match status" value="1"/>
</dbReference>
<dbReference type="Gene3D" id="1.10.20.10">
    <property type="entry name" value="Histone, subunit A"/>
    <property type="match status" value="1"/>
</dbReference>
<dbReference type="InterPro" id="IPR028255">
    <property type="entry name" value="CENP-T"/>
</dbReference>
<dbReference type="InterPro" id="IPR035425">
    <property type="entry name" value="CENP-T/H4_C"/>
</dbReference>
<dbReference type="InterPro" id="IPR032373">
    <property type="entry name" value="CENP-T_N"/>
</dbReference>
<dbReference type="InterPro" id="IPR009072">
    <property type="entry name" value="Histone-fold"/>
</dbReference>
<dbReference type="PANTHER" id="PTHR46904">
    <property type="entry name" value="CENTROMERE PROTEIN T"/>
    <property type="match status" value="1"/>
</dbReference>
<dbReference type="PANTHER" id="PTHR46904:SF1">
    <property type="entry name" value="CENTROMERE PROTEIN T"/>
    <property type="match status" value="1"/>
</dbReference>
<dbReference type="Pfam" id="PF15511">
    <property type="entry name" value="CENP-T_C"/>
    <property type="match status" value="1"/>
</dbReference>
<dbReference type="Pfam" id="PF16171">
    <property type="entry name" value="CENP-T_N"/>
    <property type="match status" value="1"/>
</dbReference>
<dbReference type="SUPFAM" id="SSF47113">
    <property type="entry name" value="Histone-fold"/>
    <property type="match status" value="1"/>
</dbReference>
<feature type="chain" id="PRO_0000417383" description="Centromere protein T">
    <location>
        <begin position="1"/>
        <end position="639"/>
    </location>
</feature>
<feature type="region of interest" description="Disordered" evidence="3">
    <location>
        <begin position="1"/>
        <end position="64"/>
    </location>
</feature>
<feature type="region of interest" description="Flexible stalk domain">
    <location>
        <begin position="80"/>
        <end position="500"/>
    </location>
</feature>
<feature type="region of interest" description="Disordered" evidence="3">
    <location>
        <begin position="266"/>
        <end position="294"/>
    </location>
</feature>
<feature type="region of interest" description="Disordered" evidence="3">
    <location>
        <begin position="307"/>
        <end position="451"/>
    </location>
</feature>
<feature type="region of interest" description="Disordered" evidence="3">
    <location>
        <begin position="458"/>
        <end position="477"/>
    </location>
</feature>
<feature type="region of interest" description="Disordered" evidence="3">
    <location>
        <begin position="494"/>
        <end position="534"/>
    </location>
</feature>
<feature type="compositionally biased region" description="Low complexity" evidence="3">
    <location>
        <begin position="12"/>
        <end position="23"/>
    </location>
</feature>
<feature type="compositionally biased region" description="Polar residues" evidence="3">
    <location>
        <begin position="267"/>
        <end position="281"/>
    </location>
</feature>
<feature type="compositionally biased region" description="Basic and acidic residues" evidence="3">
    <location>
        <begin position="307"/>
        <end position="319"/>
    </location>
</feature>
<feature type="compositionally biased region" description="Basic and acidic residues" evidence="3">
    <location>
        <begin position="329"/>
        <end position="338"/>
    </location>
</feature>
<feature type="compositionally biased region" description="Basic and acidic residues" evidence="3">
    <location>
        <begin position="356"/>
        <end position="371"/>
    </location>
</feature>
<feature type="compositionally biased region" description="Basic and acidic residues" evidence="3">
    <location>
        <begin position="432"/>
        <end position="449"/>
    </location>
</feature>
<feature type="compositionally biased region" description="Acidic residues" evidence="3">
    <location>
        <begin position="458"/>
        <end position="469"/>
    </location>
</feature>
<feature type="helix" evidence="10">
    <location>
        <begin position="66"/>
        <end position="70"/>
    </location>
</feature>
<feature type="helix" evidence="10">
    <location>
        <begin position="73"/>
        <end position="83"/>
    </location>
</feature>
<feature type="helix" evidence="9">
    <location>
        <begin position="538"/>
        <end position="549"/>
    </location>
</feature>
<feature type="helix" evidence="9">
    <location>
        <begin position="555"/>
        <end position="582"/>
    </location>
</feature>
<feature type="strand" evidence="9">
    <location>
        <begin position="586"/>
        <end position="588"/>
    </location>
</feature>
<feature type="helix" evidence="9">
    <location>
        <begin position="590"/>
        <end position="599"/>
    </location>
</feature>
<feature type="strand" evidence="8">
    <location>
        <begin position="602"/>
        <end position="604"/>
    </location>
</feature>
<feature type="strand" evidence="9">
    <location>
        <begin position="605"/>
        <end position="607"/>
    </location>
</feature>
<feature type="helix" evidence="9">
    <location>
        <begin position="609"/>
        <end position="616"/>
    </location>
</feature>
<feature type="helix" evidence="9">
    <location>
        <begin position="619"/>
        <end position="625"/>
    </location>
</feature>
<protein>
    <recommendedName>
        <fullName>Centromere protein T</fullName>
        <shortName>CENP-T</shortName>
    </recommendedName>
</protein>
<comment type="function">
    <text evidence="1 4 6">Component of the CENPA-NAC (nucleosome-associated) complex, a complex that plays a central role in assembly of kinetochore proteins, mitotic progression and chromosome segregation (By similarity). The CENPA-NAC complex recruits the CENPA-CAD (nucleosome distal) complex and may be involved in incorporation of newly synthesized CENPA into centromeres (By similarity). Part of a nucleosome-associated complex that binds specifically to histone H3-containing nucleosomes at the centromere, as opposed to nucleosomes containing CENPA. Component of the heterotetrameric CENP-T-W-S-X complex that binds and supercoils DNA, and plays an important role in kinetochore assembly. CENPT has a fundamental role in kinetochore assembly and function. It is one of the inner kinetochore proteins, with most further proteins binding downstream. Required for normal chromosome organization and normal progress through mitosis.</text>
</comment>
<comment type="subunit">
    <text evidence="2 4 5 6">Component of the CENPA-CAD complex, composed of CENPI, CENPK, CENPL, CENPO, CENPP, CENPQ, CENPR and CENPS. The CENPA-CAD complex is probably recruited on centromeres by the CENPA-NAC complex, at least composed of CENPA, CENPC, CENPH, CENPM, CENPN, CENPT and CENPU (By similarity). Identified in a centromeric complex containing histones H2A, H2B, H3 and H4, and at least CENPA, CENPB, CENPC, CENPT, CENPN, HJURP, SUPT16H, SSRP1 and RSF1 (By similarity). Interacts (via N-terminus) with the NDC80 complex (By similarity). Heterodimer with CENPW; this dimer coassembles with CENPS-CENPX heterodimers at centromeres to form the tetrameric CENP-T-W-S-X complex (PubMed:19070575, PubMed:21464230, PubMed:22304917).</text>
</comment>
<comment type="interaction">
    <interactant intactId="EBI-2132248">
        <id>F1NPG5</id>
    </interactant>
    <interactant intactId="EBI-5487792">
        <id>E1BSW7</id>
        <label>CENPS</label>
    </interactant>
    <organismsDiffer>false</organismsDiffer>
    <experiments>3</experiments>
</comment>
<comment type="interaction">
    <interactant intactId="EBI-2132248">
        <id>F1NPG5</id>
    </interactant>
    <interactant intactId="EBI-2132287">
        <id>P0DJH6</id>
        <label>CENPW</label>
    </interactant>
    <organismsDiffer>false</organismsDiffer>
    <experiments>4</experiments>
</comment>
<comment type="subcellular location">
    <subcellularLocation>
        <location evidence="4">Nucleus</location>
    </subcellularLocation>
    <subcellularLocation>
        <location evidence="4">Chromosome</location>
        <location evidence="4">Centromere</location>
    </subcellularLocation>
    <subcellularLocation>
        <location evidence="4">Chromosome</location>
        <location evidence="4">Centromere</location>
        <location evidence="4">Kinetochore</location>
    </subcellularLocation>
    <text evidence="2">Constitutively localizes to centromeres throughout the cell cycle, and to kinetochores during mitosis. Localizes to the inner kinetochore, and may connect it to the outer kinetochore via its N-terminus.</text>
</comment>
<comment type="domain">
    <text evidence="5">The largest part of the sequence forms an elongated and flexible stalk structure that is connected to a C-terminal globular domain with a histone-type fold.</text>
</comment>
<comment type="miscellaneous">
    <text>Association with CENPA-containing complexes may be indirect and due to the proximity of centromeric nucleosomes containing histone H3 with those containing CENPA.</text>
</comment>
<comment type="similarity">
    <text evidence="7">Belongs to the CENP-T/CNN1 family.</text>
</comment>
<name>CENPT_CHICK</name>
<reference key="1">
    <citation type="journal article" date="2002" name="Curr. Biol.">
        <title>A comprehensive collection of chicken cDNAs.</title>
        <authorList>
            <person name="Boardman P.E."/>
            <person name="Sanz-Ezquerro J."/>
            <person name="Overton I.M."/>
            <person name="Burt D.W."/>
            <person name="Bosch E."/>
            <person name="Fong W.T."/>
            <person name="Tickle C."/>
            <person name="Brown W.R."/>
            <person name="Wilson S.A."/>
            <person name="Hubbard S.J."/>
        </authorList>
    </citation>
    <scope>NUCLEOTIDE SEQUENCE [LARGE SCALE MRNA]</scope>
    <source>
        <strain>White Leghorn Hisex</strain>
    </source>
</reference>
<reference key="2">
    <citation type="journal article" date="2004" name="Nature">
        <title>Sequence and comparative analysis of the chicken genome provide unique perspectives on vertebrate evolution.</title>
        <authorList>
            <person name="Hillier L.W."/>
            <person name="Miller W."/>
            <person name="Birney E."/>
            <person name="Warren W."/>
            <person name="Hardison R.C."/>
            <person name="Ponting C.P."/>
            <person name="Bork P."/>
            <person name="Burt D.W."/>
            <person name="Groenen M.A.M."/>
            <person name="Delany M.E."/>
            <person name="Dodgson J.B."/>
            <person name="Chinwalla A.T."/>
            <person name="Cliften P.F."/>
            <person name="Clifton S.W."/>
            <person name="Delehaunty K.D."/>
            <person name="Fronick C."/>
            <person name="Fulton R.S."/>
            <person name="Graves T.A."/>
            <person name="Kremitzki C."/>
            <person name="Layman D."/>
            <person name="Magrini V."/>
            <person name="McPherson J.D."/>
            <person name="Miner T.L."/>
            <person name="Minx P."/>
            <person name="Nash W.E."/>
            <person name="Nhan M.N."/>
            <person name="Nelson J.O."/>
            <person name="Oddy L.G."/>
            <person name="Pohl C.S."/>
            <person name="Randall-Maher J."/>
            <person name="Smith S.M."/>
            <person name="Wallis J.W."/>
            <person name="Yang S.-P."/>
            <person name="Romanov M.N."/>
            <person name="Rondelli C.M."/>
            <person name="Paton B."/>
            <person name="Smith J."/>
            <person name="Morrice D."/>
            <person name="Daniels L."/>
            <person name="Tempest H.G."/>
            <person name="Robertson L."/>
            <person name="Masabanda J.S."/>
            <person name="Griffin D.K."/>
            <person name="Vignal A."/>
            <person name="Fillon V."/>
            <person name="Jacobbson L."/>
            <person name="Kerje S."/>
            <person name="Andersson L."/>
            <person name="Crooijmans R.P."/>
            <person name="Aerts J."/>
            <person name="van der Poel J.J."/>
            <person name="Ellegren H."/>
            <person name="Caldwell R.B."/>
            <person name="Hubbard S.J."/>
            <person name="Grafham D.V."/>
            <person name="Kierzek A.M."/>
            <person name="McLaren S.R."/>
            <person name="Overton I.M."/>
            <person name="Arakawa H."/>
            <person name="Beattie K.J."/>
            <person name="Bezzubov Y."/>
            <person name="Boardman P.E."/>
            <person name="Bonfield J.K."/>
            <person name="Croning M.D.R."/>
            <person name="Davies R.M."/>
            <person name="Francis M.D."/>
            <person name="Humphray S.J."/>
            <person name="Scott C.E."/>
            <person name="Taylor R.G."/>
            <person name="Tickle C."/>
            <person name="Brown W.R.A."/>
            <person name="Rogers J."/>
            <person name="Buerstedde J.-M."/>
            <person name="Wilson S.A."/>
            <person name="Stubbs L."/>
            <person name="Ovcharenko I."/>
            <person name="Gordon L."/>
            <person name="Lucas S."/>
            <person name="Miller M.M."/>
            <person name="Inoko H."/>
            <person name="Shiina T."/>
            <person name="Kaufman J."/>
            <person name="Salomonsen J."/>
            <person name="Skjoedt K."/>
            <person name="Wong G.K.-S."/>
            <person name="Wang J."/>
            <person name="Liu B."/>
            <person name="Wang J."/>
            <person name="Yu J."/>
            <person name="Yang H."/>
            <person name="Nefedov M."/>
            <person name="Koriabine M."/>
            <person name="Dejong P.J."/>
            <person name="Goodstadt L."/>
            <person name="Webber C."/>
            <person name="Dickens N.J."/>
            <person name="Letunic I."/>
            <person name="Suyama M."/>
            <person name="Torrents D."/>
            <person name="von Mering C."/>
            <person name="Zdobnov E.M."/>
            <person name="Makova K."/>
            <person name="Nekrutenko A."/>
            <person name="Elnitski L."/>
            <person name="Eswara P."/>
            <person name="King D.C."/>
            <person name="Yang S.-P."/>
            <person name="Tyekucheva S."/>
            <person name="Radakrishnan A."/>
            <person name="Harris R.S."/>
            <person name="Chiaromonte F."/>
            <person name="Taylor J."/>
            <person name="He J."/>
            <person name="Rijnkels M."/>
            <person name="Griffiths-Jones S."/>
            <person name="Ureta-Vidal A."/>
            <person name="Hoffman M.M."/>
            <person name="Severin J."/>
            <person name="Searle S.M.J."/>
            <person name="Law A.S."/>
            <person name="Speed D."/>
            <person name="Waddington D."/>
            <person name="Cheng Z."/>
            <person name="Tuzun E."/>
            <person name="Eichler E."/>
            <person name="Bao Z."/>
            <person name="Flicek P."/>
            <person name="Shteynberg D.D."/>
            <person name="Brent M.R."/>
            <person name="Bye J.M."/>
            <person name="Huckle E.J."/>
            <person name="Chatterji S."/>
            <person name="Dewey C."/>
            <person name="Pachter L."/>
            <person name="Kouranov A."/>
            <person name="Mourelatos Z."/>
            <person name="Hatzigeorgiou A.G."/>
            <person name="Paterson A.H."/>
            <person name="Ivarie R."/>
            <person name="Brandstrom M."/>
            <person name="Axelsson E."/>
            <person name="Backstrom N."/>
            <person name="Berlin S."/>
            <person name="Webster M.T."/>
            <person name="Pourquie O."/>
            <person name="Reymond A."/>
            <person name="Ucla C."/>
            <person name="Antonarakis S.E."/>
            <person name="Long M."/>
            <person name="Emerson J.J."/>
            <person name="Betran E."/>
            <person name="Dupanloup I."/>
            <person name="Kaessmann H."/>
            <person name="Hinrichs A.S."/>
            <person name="Bejerano G."/>
            <person name="Furey T.S."/>
            <person name="Harte R.A."/>
            <person name="Raney B."/>
            <person name="Siepel A."/>
            <person name="Kent W.J."/>
            <person name="Haussler D."/>
            <person name="Eyras E."/>
            <person name="Castelo R."/>
            <person name="Abril J.F."/>
            <person name="Castellano S."/>
            <person name="Camara F."/>
            <person name="Parra G."/>
            <person name="Guigo R."/>
            <person name="Bourque G."/>
            <person name="Tesler G."/>
            <person name="Pevzner P.A."/>
            <person name="Smit A."/>
            <person name="Fulton L.A."/>
            <person name="Mardis E.R."/>
            <person name="Wilson R.K."/>
        </authorList>
    </citation>
    <scope>NUCLEOTIDE SEQUENCE [LARGE SCALE GENOMIC DNA]</scope>
    <source>
        <strain>Red jungle fowl</strain>
    </source>
</reference>
<reference key="3">
    <citation type="journal article" date="2008" name="Cell">
        <title>CCAN makes multiple contacts with centromeric DNA to provide distinct pathways to the outer kinetochore.</title>
        <authorList>
            <person name="Hori T."/>
            <person name="Amano M."/>
            <person name="Suzuki A."/>
            <person name="Backer C.B."/>
            <person name="Welburn J.P."/>
            <person name="Dong Y."/>
            <person name="McEwen B.F."/>
            <person name="Shang W.-H."/>
            <person name="Suzuki E."/>
            <person name="Okawa K."/>
            <person name="Cheeseman I.M."/>
            <person name="Fukagawa T."/>
        </authorList>
    </citation>
    <scope>FUNCTION</scope>
    <scope>INTERACTION WITH CENPW</scope>
    <scope>SUBCELLULAR LOCATION</scope>
</reference>
<reference key="4">
    <citation type="journal article" date="2011" name="J. Cell Biol.">
        <title>Spindle microtubules generate tension-dependent changes in the distribution of inner kinetochore proteins.</title>
        <authorList>
            <person name="Suzuki A."/>
            <person name="Hori T."/>
            <person name="Nishino T."/>
            <person name="Usukura J."/>
            <person name="Miyagi A."/>
            <person name="Morikawa K."/>
            <person name="Fukagawa T."/>
        </authorList>
    </citation>
    <scope>SUBCELLULAR LOCATION</scope>
    <scope>DOMAIN</scope>
    <scope>INTERACTION WITH CENPW</scope>
</reference>
<reference key="5">
    <citation type="journal article" date="2012" name="Cell">
        <title>CENP-T-W-S-X forms a unique centromeric chromatin structure with a histone-like fold.</title>
        <authorList>
            <person name="Nishino T."/>
            <person name="Takeuchi K."/>
            <person name="Gascoigne K.E."/>
            <person name="Suzuki A."/>
            <person name="Hori T."/>
            <person name="Oyama T."/>
            <person name="Morikawa K."/>
            <person name="Cheeseman I.M."/>
            <person name="Fukagawa T."/>
        </authorList>
    </citation>
    <scope>X-RAY CRYSTALLOGRAPHY (2.20 ANGSTROMS) OF 54-162</scope>
    <scope>FUNCTION</scope>
    <scope>INTERACTION WITH CENPS; CENPW AND CEPNX</scope>
    <scope>SUBCELLULAR LOCATION</scope>
</reference>
<keyword id="KW-0002">3D-structure</keyword>
<keyword id="KW-0131">Cell cycle</keyword>
<keyword id="KW-0132">Cell division</keyword>
<keyword id="KW-0137">Centromere</keyword>
<keyword id="KW-0158">Chromosome</keyword>
<keyword id="KW-0238">DNA-binding</keyword>
<keyword id="KW-0995">Kinetochore</keyword>
<keyword id="KW-0498">Mitosis</keyword>
<keyword id="KW-0539">Nucleus</keyword>
<keyword id="KW-1185">Reference proteome</keyword>
<evidence type="ECO:0000250" key="1"/>
<evidence type="ECO:0000250" key="2">
    <source>
        <dbReference type="UniProtKB" id="Q96BT3"/>
    </source>
</evidence>
<evidence type="ECO:0000256" key="3">
    <source>
        <dbReference type="SAM" id="MobiDB-lite"/>
    </source>
</evidence>
<evidence type="ECO:0000269" key="4">
    <source>
    </source>
</evidence>
<evidence type="ECO:0000269" key="5">
    <source>
    </source>
</evidence>
<evidence type="ECO:0000269" key="6">
    <source>
    </source>
</evidence>
<evidence type="ECO:0000305" key="7"/>
<evidence type="ECO:0007829" key="8">
    <source>
        <dbReference type="PDB" id="3B0C"/>
    </source>
</evidence>
<evidence type="ECO:0007829" key="9">
    <source>
        <dbReference type="PDB" id="3B0D"/>
    </source>
</evidence>
<evidence type="ECO:0007829" key="10">
    <source>
        <dbReference type="PDB" id="3VZA"/>
    </source>
</evidence>
<proteinExistence type="evidence at protein level"/>
<sequence>MDGRVGLRASRRAAPTPRVAVRSSPRHRARVREQEPVVSAMSGSGLGKENKAGSSTPLRHRPNAFSELDNATPRVMLRKIIQNQPQVSPLALQTVQLEETEDARPEPPSQRTSSTVELQLPDLVPEDASVTTFRMTRKRKKLSISEFERAADKRLPQNQAHSTLDSTLVRSLRMSVGSVMAPDTVEKRGLLRRPQNHKAIDIAAFEGGVEQNMLQIKAQDYLVDLQTSSMTGTTTIRTDAEVVLNNTELFVEPQLGEQNLLAVEPQLSDSKTSAQRSNTSYPAHEKARLEGLVSRVSTDERRTLRFSEKDLITDHEHVDGITQKTPAKQGEEEQDHSQQNDPMEQFSESEEMAGTTEHHADAEYSEHSEKKLSRKAVSQLTAAQDAGVEMEMTPSEGGVAEGTEHQDSPKAELQMAGSPGGHSPASYSLEKPGAKPLKEAVEQTGEIERGTITGVLDAAEEEATDDESDKEDHESEEISMKTPMFVHAAAYRPQPVLSPPHPVKSASPELPPQPVRAKPVPKSSGAAQRKTREPEIASSLIKQIFSHYVKTPVTRDAYKIVEKCSERYFKQISSDLEAYSQHAGRKTVEMADVELLMRRQGLVTDKMPLHVLVERHLPLEYRKLLIPIAVSGNKVIPCK</sequence>
<accession>F1NPG5</accession>
<gene>
    <name type="primary">CENPT</name>
</gene>